<proteinExistence type="inferred from homology"/>
<sequence length="642" mass="73986">MPVITLPDGSQRHYDHAVSPMDVALDIGPGLAKACIAGRVNGELVDACDLIENDAQLSIITAKDEDGLEIIRHSCAHLLGHAIKQLWPHTKMAIGPVIDNGFYYDVDLDRTLTQEDVEALEKRMHELAEKNYDVIKKKVSWHEARETFANRGESYKVSILDENIAHDDKPGLYFHEEYVDMCRGPHVPNMRFCHHFKLMKTAGAYWRGDSNNKMLQRIYGTAWADKKALNAYLQRLEEAAKRDHRKIGKQLDLYHMQEEAPGMVFWHNDGWTIFRELEVFVRSKLKEYQYQEVKGPFMMDRVLWEKTGHWDNYKDAMFTTSSENREYCIKPMNCPGHVQIFNQGLKSYRDLPLRMAEFGSCHRNEPSGSLHGLMRVRGFTQDDAHIFCTEEQIRDEVNGCIRLVYDMYSTFGFEKIVVKLSTRPEKRIGSDEMWDRAEADLAVALEENNIPFEYQLGEGAFYGPKIEFTLYDCLDRAWQCGTVQLDFSLPSRLSASYVGEDNERKVPVMIHRAILGSMERFIGILTEEFAGFFPTWLAPVQVVIMNITDSQSDYVNELTQKLSNAGIRVKADLRNEKIGFKIREHTLRRVPYMLVCGDKEVESGKVAVRTRRGKDLGSMDVNEVIEKLQQEIRSRSLKQLEE</sequence>
<evidence type="ECO:0000255" key="1">
    <source>
        <dbReference type="HAMAP-Rule" id="MF_00184"/>
    </source>
</evidence>
<evidence type="ECO:0000255" key="2">
    <source>
        <dbReference type="PROSITE-ProRule" id="PRU01228"/>
    </source>
</evidence>
<comment type="function">
    <text evidence="1">Catalyzes the attachment of threonine to tRNA(Thr) in a two-step reaction: L-threonine is first activated by ATP to form Thr-AMP and then transferred to the acceptor end of tRNA(Thr). Also edits incorrectly charged L-seryl-tRNA(Thr).</text>
</comment>
<comment type="catalytic activity">
    <reaction evidence="1">
        <text>tRNA(Thr) + L-threonine + ATP = L-threonyl-tRNA(Thr) + AMP + diphosphate + H(+)</text>
        <dbReference type="Rhea" id="RHEA:24624"/>
        <dbReference type="Rhea" id="RHEA-COMP:9670"/>
        <dbReference type="Rhea" id="RHEA-COMP:9704"/>
        <dbReference type="ChEBI" id="CHEBI:15378"/>
        <dbReference type="ChEBI" id="CHEBI:30616"/>
        <dbReference type="ChEBI" id="CHEBI:33019"/>
        <dbReference type="ChEBI" id="CHEBI:57926"/>
        <dbReference type="ChEBI" id="CHEBI:78442"/>
        <dbReference type="ChEBI" id="CHEBI:78534"/>
        <dbReference type="ChEBI" id="CHEBI:456215"/>
        <dbReference type="EC" id="6.1.1.3"/>
    </reaction>
</comment>
<comment type="cofactor">
    <cofactor evidence="1">
        <name>Zn(2+)</name>
        <dbReference type="ChEBI" id="CHEBI:29105"/>
    </cofactor>
    <text evidence="1">Binds 1 zinc ion per subunit.</text>
</comment>
<comment type="subunit">
    <text evidence="1">Homodimer.</text>
</comment>
<comment type="subcellular location">
    <subcellularLocation>
        <location evidence="1">Cytoplasm</location>
    </subcellularLocation>
</comment>
<comment type="similarity">
    <text evidence="1">Belongs to the class-II aminoacyl-tRNA synthetase family.</text>
</comment>
<organism>
    <name type="scientific">Escherichia coli (strain ATCC 8739 / DSM 1576 / NBRC 3972 / NCIMB 8545 / WDCM 00012 / Crooks)</name>
    <dbReference type="NCBI Taxonomy" id="481805"/>
    <lineage>
        <taxon>Bacteria</taxon>
        <taxon>Pseudomonadati</taxon>
        <taxon>Pseudomonadota</taxon>
        <taxon>Gammaproteobacteria</taxon>
        <taxon>Enterobacterales</taxon>
        <taxon>Enterobacteriaceae</taxon>
        <taxon>Escherichia</taxon>
    </lineage>
</organism>
<feature type="chain" id="PRO_1000077357" description="Threonine--tRNA ligase">
    <location>
        <begin position="1"/>
        <end position="642"/>
    </location>
</feature>
<feature type="domain" description="TGS" evidence="2">
    <location>
        <begin position="1"/>
        <end position="61"/>
    </location>
</feature>
<feature type="region of interest" description="Catalytic" evidence="1">
    <location>
        <begin position="243"/>
        <end position="534"/>
    </location>
</feature>
<feature type="binding site" evidence="1">
    <location>
        <position position="334"/>
    </location>
    <ligand>
        <name>Zn(2+)</name>
        <dbReference type="ChEBI" id="CHEBI:29105"/>
    </ligand>
</feature>
<feature type="binding site" evidence="1">
    <location>
        <position position="385"/>
    </location>
    <ligand>
        <name>Zn(2+)</name>
        <dbReference type="ChEBI" id="CHEBI:29105"/>
    </ligand>
</feature>
<feature type="binding site" evidence="1">
    <location>
        <position position="511"/>
    </location>
    <ligand>
        <name>Zn(2+)</name>
        <dbReference type="ChEBI" id="CHEBI:29105"/>
    </ligand>
</feature>
<feature type="modified residue" description="N6-acetyllysine" evidence="1">
    <location>
        <position position="286"/>
    </location>
</feature>
<dbReference type="EC" id="6.1.1.3" evidence="1"/>
<dbReference type="EMBL" id="CP000946">
    <property type="protein sequence ID" value="ACA77559.1"/>
    <property type="molecule type" value="Genomic_DNA"/>
</dbReference>
<dbReference type="RefSeq" id="WP_001144190.1">
    <property type="nucleotide sequence ID" value="NZ_MTFT01000006.1"/>
</dbReference>
<dbReference type="SMR" id="B1IPK9"/>
<dbReference type="GeneID" id="75205636"/>
<dbReference type="KEGG" id="ecl:EcolC_1913"/>
<dbReference type="HOGENOM" id="CLU_008554_0_1_6"/>
<dbReference type="GO" id="GO:0005829">
    <property type="term" value="C:cytosol"/>
    <property type="evidence" value="ECO:0007669"/>
    <property type="project" value="TreeGrafter"/>
</dbReference>
<dbReference type="GO" id="GO:0005524">
    <property type="term" value="F:ATP binding"/>
    <property type="evidence" value="ECO:0007669"/>
    <property type="project" value="UniProtKB-UniRule"/>
</dbReference>
<dbReference type="GO" id="GO:0046872">
    <property type="term" value="F:metal ion binding"/>
    <property type="evidence" value="ECO:0007669"/>
    <property type="project" value="UniProtKB-KW"/>
</dbReference>
<dbReference type="GO" id="GO:0004829">
    <property type="term" value="F:threonine-tRNA ligase activity"/>
    <property type="evidence" value="ECO:0007669"/>
    <property type="project" value="UniProtKB-UniRule"/>
</dbReference>
<dbReference type="GO" id="GO:0000049">
    <property type="term" value="F:tRNA binding"/>
    <property type="evidence" value="ECO:0007669"/>
    <property type="project" value="UniProtKB-KW"/>
</dbReference>
<dbReference type="GO" id="GO:0006435">
    <property type="term" value="P:threonyl-tRNA aminoacylation"/>
    <property type="evidence" value="ECO:0007669"/>
    <property type="project" value="UniProtKB-UniRule"/>
</dbReference>
<dbReference type="CDD" id="cd01667">
    <property type="entry name" value="TGS_ThrRS"/>
    <property type="match status" value="1"/>
</dbReference>
<dbReference type="CDD" id="cd00860">
    <property type="entry name" value="ThrRS_anticodon"/>
    <property type="match status" value="1"/>
</dbReference>
<dbReference type="CDD" id="cd00771">
    <property type="entry name" value="ThrRS_core"/>
    <property type="match status" value="1"/>
</dbReference>
<dbReference type="FunFam" id="3.10.20.30:FF:000005">
    <property type="entry name" value="Threonine--tRNA ligase"/>
    <property type="match status" value="1"/>
</dbReference>
<dbReference type="FunFam" id="3.30.54.20:FF:000002">
    <property type="entry name" value="Threonine--tRNA ligase"/>
    <property type="match status" value="1"/>
</dbReference>
<dbReference type="FunFam" id="3.30.930.10:FF:000002">
    <property type="entry name" value="Threonine--tRNA ligase"/>
    <property type="match status" value="1"/>
</dbReference>
<dbReference type="FunFam" id="3.40.50.800:FF:000001">
    <property type="entry name" value="Threonine--tRNA ligase"/>
    <property type="match status" value="1"/>
</dbReference>
<dbReference type="FunFam" id="3.30.980.10:FF:000005">
    <property type="entry name" value="Threonyl-tRNA synthetase, mitochondrial"/>
    <property type="match status" value="1"/>
</dbReference>
<dbReference type="Gene3D" id="3.10.20.30">
    <property type="match status" value="1"/>
</dbReference>
<dbReference type="Gene3D" id="3.30.54.20">
    <property type="match status" value="1"/>
</dbReference>
<dbReference type="Gene3D" id="3.40.50.800">
    <property type="entry name" value="Anticodon-binding domain"/>
    <property type="match status" value="1"/>
</dbReference>
<dbReference type="Gene3D" id="3.30.930.10">
    <property type="entry name" value="Bira Bifunctional Protein, Domain 2"/>
    <property type="match status" value="1"/>
</dbReference>
<dbReference type="Gene3D" id="3.30.980.10">
    <property type="entry name" value="Threonyl-trna Synthetase, Chain A, domain 2"/>
    <property type="match status" value="1"/>
</dbReference>
<dbReference type="HAMAP" id="MF_00184">
    <property type="entry name" value="Thr_tRNA_synth"/>
    <property type="match status" value="1"/>
</dbReference>
<dbReference type="InterPro" id="IPR002314">
    <property type="entry name" value="aa-tRNA-synt_IIb"/>
</dbReference>
<dbReference type="InterPro" id="IPR006195">
    <property type="entry name" value="aa-tRNA-synth_II"/>
</dbReference>
<dbReference type="InterPro" id="IPR045864">
    <property type="entry name" value="aa-tRNA-synth_II/BPL/LPL"/>
</dbReference>
<dbReference type="InterPro" id="IPR004154">
    <property type="entry name" value="Anticodon-bd"/>
</dbReference>
<dbReference type="InterPro" id="IPR036621">
    <property type="entry name" value="Anticodon-bd_dom_sf"/>
</dbReference>
<dbReference type="InterPro" id="IPR012675">
    <property type="entry name" value="Beta-grasp_dom_sf"/>
</dbReference>
<dbReference type="InterPro" id="IPR004095">
    <property type="entry name" value="TGS"/>
</dbReference>
<dbReference type="InterPro" id="IPR012676">
    <property type="entry name" value="TGS-like"/>
</dbReference>
<dbReference type="InterPro" id="IPR002320">
    <property type="entry name" value="Thr-tRNA-ligase_IIa"/>
</dbReference>
<dbReference type="InterPro" id="IPR018163">
    <property type="entry name" value="Thr/Ala-tRNA-synth_IIc_edit"/>
</dbReference>
<dbReference type="InterPro" id="IPR047246">
    <property type="entry name" value="ThrRS_anticodon"/>
</dbReference>
<dbReference type="InterPro" id="IPR033728">
    <property type="entry name" value="ThrRS_core"/>
</dbReference>
<dbReference type="InterPro" id="IPR012947">
    <property type="entry name" value="tRNA_SAD"/>
</dbReference>
<dbReference type="NCBIfam" id="TIGR00418">
    <property type="entry name" value="thrS"/>
    <property type="match status" value="1"/>
</dbReference>
<dbReference type="PANTHER" id="PTHR11451:SF44">
    <property type="entry name" value="THREONINE--TRNA LIGASE, CHLOROPLASTIC_MITOCHONDRIAL 2"/>
    <property type="match status" value="1"/>
</dbReference>
<dbReference type="PANTHER" id="PTHR11451">
    <property type="entry name" value="THREONINE-TRNA LIGASE"/>
    <property type="match status" value="1"/>
</dbReference>
<dbReference type="Pfam" id="PF03129">
    <property type="entry name" value="HGTP_anticodon"/>
    <property type="match status" value="1"/>
</dbReference>
<dbReference type="Pfam" id="PF02824">
    <property type="entry name" value="TGS"/>
    <property type="match status" value="1"/>
</dbReference>
<dbReference type="Pfam" id="PF00587">
    <property type="entry name" value="tRNA-synt_2b"/>
    <property type="match status" value="1"/>
</dbReference>
<dbReference type="Pfam" id="PF07973">
    <property type="entry name" value="tRNA_SAD"/>
    <property type="match status" value="1"/>
</dbReference>
<dbReference type="PRINTS" id="PR01047">
    <property type="entry name" value="TRNASYNTHTHR"/>
</dbReference>
<dbReference type="SMART" id="SM00863">
    <property type="entry name" value="tRNA_SAD"/>
    <property type="match status" value="1"/>
</dbReference>
<dbReference type="SUPFAM" id="SSF52954">
    <property type="entry name" value="Class II aaRS ABD-related"/>
    <property type="match status" value="1"/>
</dbReference>
<dbReference type="SUPFAM" id="SSF55681">
    <property type="entry name" value="Class II aaRS and biotin synthetases"/>
    <property type="match status" value="1"/>
</dbReference>
<dbReference type="SUPFAM" id="SSF81271">
    <property type="entry name" value="TGS-like"/>
    <property type="match status" value="1"/>
</dbReference>
<dbReference type="SUPFAM" id="SSF55186">
    <property type="entry name" value="ThrRS/AlaRS common domain"/>
    <property type="match status" value="1"/>
</dbReference>
<dbReference type="PROSITE" id="PS50862">
    <property type="entry name" value="AA_TRNA_LIGASE_II"/>
    <property type="match status" value="1"/>
</dbReference>
<dbReference type="PROSITE" id="PS51880">
    <property type="entry name" value="TGS"/>
    <property type="match status" value="1"/>
</dbReference>
<name>SYT_ECOLC</name>
<accession>B1IPK9</accession>
<protein>
    <recommendedName>
        <fullName evidence="1">Threonine--tRNA ligase</fullName>
        <ecNumber evidence="1">6.1.1.3</ecNumber>
    </recommendedName>
    <alternativeName>
        <fullName evidence="1">Threonyl-tRNA synthetase</fullName>
        <shortName evidence="1">ThrRS</shortName>
    </alternativeName>
</protein>
<gene>
    <name evidence="1" type="primary">thrS</name>
    <name type="ordered locus">EcolC_1913</name>
</gene>
<reference key="1">
    <citation type="submission" date="2008-02" db="EMBL/GenBank/DDBJ databases">
        <title>Complete sequence of Escherichia coli C str. ATCC 8739.</title>
        <authorList>
            <person name="Copeland A."/>
            <person name="Lucas S."/>
            <person name="Lapidus A."/>
            <person name="Glavina del Rio T."/>
            <person name="Dalin E."/>
            <person name="Tice H."/>
            <person name="Bruce D."/>
            <person name="Goodwin L."/>
            <person name="Pitluck S."/>
            <person name="Kiss H."/>
            <person name="Brettin T."/>
            <person name="Detter J.C."/>
            <person name="Han C."/>
            <person name="Kuske C.R."/>
            <person name="Schmutz J."/>
            <person name="Larimer F."/>
            <person name="Land M."/>
            <person name="Hauser L."/>
            <person name="Kyrpides N."/>
            <person name="Mikhailova N."/>
            <person name="Ingram L."/>
            <person name="Richardson P."/>
        </authorList>
    </citation>
    <scope>NUCLEOTIDE SEQUENCE [LARGE SCALE GENOMIC DNA]</scope>
    <source>
        <strain>ATCC 8739 / DSM 1576 / NBRC 3972 / NCIMB 8545 / WDCM 00012 / Crooks</strain>
    </source>
</reference>
<keyword id="KW-0007">Acetylation</keyword>
<keyword id="KW-0030">Aminoacyl-tRNA synthetase</keyword>
<keyword id="KW-0067">ATP-binding</keyword>
<keyword id="KW-0963">Cytoplasm</keyword>
<keyword id="KW-0436">Ligase</keyword>
<keyword id="KW-0479">Metal-binding</keyword>
<keyword id="KW-0547">Nucleotide-binding</keyword>
<keyword id="KW-0648">Protein biosynthesis</keyword>
<keyword id="KW-0694">RNA-binding</keyword>
<keyword id="KW-0820">tRNA-binding</keyword>
<keyword id="KW-0862">Zinc</keyword>